<feature type="chain" id="PRO_0000294640" description="ATP-dependent RNA helicase DRS1">
    <location>
        <begin position="1"/>
        <end position="686"/>
    </location>
</feature>
<feature type="domain" description="Helicase ATP-binding" evidence="3">
    <location>
        <begin position="227"/>
        <end position="402"/>
    </location>
</feature>
<feature type="domain" description="Helicase C-terminal" evidence="4">
    <location>
        <begin position="414"/>
        <end position="581"/>
    </location>
</feature>
<feature type="region of interest" description="Disordered" evidence="5">
    <location>
        <begin position="17"/>
        <end position="77"/>
    </location>
</feature>
<feature type="region of interest" description="Disordered" evidence="5">
    <location>
        <begin position="94"/>
        <end position="192"/>
    </location>
</feature>
<feature type="region of interest" description="Disordered" evidence="5">
    <location>
        <begin position="638"/>
        <end position="686"/>
    </location>
</feature>
<feature type="coiled-coil region" evidence="2">
    <location>
        <begin position="586"/>
        <end position="666"/>
    </location>
</feature>
<feature type="short sequence motif" description="Q motif">
    <location>
        <begin position="196"/>
        <end position="224"/>
    </location>
</feature>
<feature type="short sequence motif" description="DEAD box">
    <location>
        <begin position="349"/>
        <end position="352"/>
    </location>
</feature>
<feature type="compositionally biased region" description="Acidic residues" evidence="5">
    <location>
        <begin position="17"/>
        <end position="30"/>
    </location>
</feature>
<feature type="compositionally biased region" description="Basic residues" evidence="5">
    <location>
        <begin position="47"/>
        <end position="56"/>
    </location>
</feature>
<feature type="compositionally biased region" description="Acidic residues" evidence="5">
    <location>
        <begin position="60"/>
        <end position="71"/>
    </location>
</feature>
<feature type="compositionally biased region" description="Basic and acidic residues" evidence="5">
    <location>
        <begin position="94"/>
        <end position="119"/>
    </location>
</feature>
<feature type="compositionally biased region" description="Acidic residues" evidence="5">
    <location>
        <begin position="120"/>
        <end position="142"/>
    </location>
</feature>
<feature type="compositionally biased region" description="Acidic residues" evidence="5">
    <location>
        <begin position="155"/>
        <end position="179"/>
    </location>
</feature>
<feature type="compositionally biased region" description="Polar residues" evidence="5">
    <location>
        <begin position="181"/>
        <end position="192"/>
    </location>
</feature>
<feature type="compositionally biased region" description="Basic residues" evidence="5">
    <location>
        <begin position="639"/>
        <end position="650"/>
    </location>
</feature>
<feature type="compositionally biased region" description="Basic and acidic residues" evidence="5">
    <location>
        <begin position="651"/>
        <end position="673"/>
    </location>
</feature>
<feature type="compositionally biased region" description="Basic residues" evidence="5">
    <location>
        <begin position="674"/>
        <end position="686"/>
    </location>
</feature>
<feature type="binding site" evidence="3">
    <location>
        <begin position="240"/>
        <end position="247"/>
    </location>
    <ligand>
        <name>ATP</name>
        <dbReference type="ChEBI" id="CHEBI:30616"/>
    </ligand>
</feature>
<proteinExistence type="inferred from homology"/>
<comment type="function">
    <text evidence="1">ATP-binding RNA helicase involved in ribosome assembly.</text>
</comment>
<comment type="catalytic activity">
    <reaction>
        <text>ATP + H2O = ADP + phosphate + H(+)</text>
        <dbReference type="Rhea" id="RHEA:13065"/>
        <dbReference type="ChEBI" id="CHEBI:15377"/>
        <dbReference type="ChEBI" id="CHEBI:15378"/>
        <dbReference type="ChEBI" id="CHEBI:30616"/>
        <dbReference type="ChEBI" id="CHEBI:43474"/>
        <dbReference type="ChEBI" id="CHEBI:456216"/>
        <dbReference type="EC" id="3.6.4.13"/>
    </reaction>
</comment>
<comment type="subunit">
    <text evidence="1">Associates with pre-ribosomal particles.</text>
</comment>
<comment type="subcellular location">
    <subcellularLocation>
        <location evidence="1">Nucleus</location>
        <location evidence="1">Nucleolus</location>
    </subcellularLocation>
</comment>
<comment type="domain">
    <text>The Q motif is unique to and characteristic of the DEAD box family of RNA helicases and controls ATP binding and hydrolysis.</text>
</comment>
<comment type="similarity">
    <text evidence="6">Belongs to the DEAD box helicase family. DDX27/DRS1 subfamily.</text>
</comment>
<evidence type="ECO:0000250" key="1"/>
<evidence type="ECO:0000255" key="2"/>
<evidence type="ECO:0000255" key="3">
    <source>
        <dbReference type="PROSITE-ProRule" id="PRU00541"/>
    </source>
</evidence>
<evidence type="ECO:0000255" key="4">
    <source>
        <dbReference type="PROSITE-ProRule" id="PRU00542"/>
    </source>
</evidence>
<evidence type="ECO:0000256" key="5">
    <source>
        <dbReference type="SAM" id="MobiDB-lite"/>
    </source>
</evidence>
<evidence type="ECO:0000305" key="6"/>
<keyword id="KW-0067">ATP-binding</keyword>
<keyword id="KW-0175">Coiled coil</keyword>
<keyword id="KW-0347">Helicase</keyword>
<keyword id="KW-0378">Hydrolase</keyword>
<keyword id="KW-0547">Nucleotide-binding</keyword>
<keyword id="KW-0539">Nucleus</keyword>
<keyword id="KW-1185">Reference proteome</keyword>
<keyword id="KW-0690">Ribosome biogenesis</keyword>
<keyword id="KW-0694">RNA-binding</keyword>
<sequence>MAKNEDLILTIDSDAEYDNISESSEEEAEEAVSVKSKKKNNNNNNNKKSKAGKHGKANLEEAEAEEDDDEARGEMNLDFQFSLGDDLNEIKDWEVEEPAKDIDLNEIIKKKRESKKDGNGDDEEDDGDEDEDASESEEDDEKEELKAAGKNGQAGDDDEDENEDEDEEEEVDTKEDLDNFYESQETNTSASALKSKTFQELQLSRPILKSLQQLGFTVPTPVQASTIPIALLGKDIVASAQTGSGKTAAYLIPIIERLLYVKNSTSTKAIILTPTRELAIQVHDVGRKLGQFVSNLNFGMAVGGLSLKQQEQQLKTRPDIVIATPGRLIDHIRNSPSFSVEDVQVLIIDEADRMLEEGFQEELTEILSLIPKQKRQTLLFSATMNNTKIQDLVQLSLNKPIKVSIDPPRTVASKLEQQFVRIRKREELKPAVLYLLLKKLEGRTVVFTRTKVEAHKLRIILGLLGLTVAELHGALTQEQRLANVKAFKNNVNVLICTDLAARGLDIRIEYVINYDMPKTYEIYTHRVGRTARAGRKGTSISFVGESMQDRNIVKNAIQFNSRSVARKIDWDEVEKIQTKIKLNEGAIEEVIEEEKQAREIMRAEMQLNKAENLMKYEKEIKSRPKRTWFKSEVMEHLTKHGKKVNAKKRKANEERKEEGKERSYKKTKADRTKLKTKAKSSSKKRK</sequence>
<protein>
    <recommendedName>
        <fullName>ATP-dependent RNA helicase DRS1</fullName>
        <ecNumber>3.6.4.13</ecNumber>
    </recommendedName>
</protein>
<organism>
    <name type="scientific">Lodderomyces elongisporus (strain ATCC 11503 / CBS 2605 / JCM 1781 / NBRC 1676 / NRRL YB-4239)</name>
    <name type="common">Yeast</name>
    <name type="synonym">Saccharomyces elongisporus</name>
    <dbReference type="NCBI Taxonomy" id="379508"/>
    <lineage>
        <taxon>Eukaryota</taxon>
        <taxon>Fungi</taxon>
        <taxon>Dikarya</taxon>
        <taxon>Ascomycota</taxon>
        <taxon>Saccharomycotina</taxon>
        <taxon>Pichiomycetes</taxon>
        <taxon>Debaryomycetaceae</taxon>
        <taxon>Candida/Lodderomyces clade</taxon>
        <taxon>Lodderomyces</taxon>
    </lineage>
</organism>
<reference key="1">
    <citation type="journal article" date="2009" name="Nature">
        <title>Evolution of pathogenicity and sexual reproduction in eight Candida genomes.</title>
        <authorList>
            <person name="Butler G."/>
            <person name="Rasmussen M.D."/>
            <person name="Lin M.F."/>
            <person name="Santos M.A.S."/>
            <person name="Sakthikumar S."/>
            <person name="Munro C.A."/>
            <person name="Rheinbay E."/>
            <person name="Grabherr M."/>
            <person name="Forche A."/>
            <person name="Reedy J.L."/>
            <person name="Agrafioti I."/>
            <person name="Arnaud M.B."/>
            <person name="Bates S."/>
            <person name="Brown A.J.P."/>
            <person name="Brunke S."/>
            <person name="Costanzo M.C."/>
            <person name="Fitzpatrick D.A."/>
            <person name="de Groot P.W.J."/>
            <person name="Harris D."/>
            <person name="Hoyer L.L."/>
            <person name="Hube B."/>
            <person name="Klis F.M."/>
            <person name="Kodira C."/>
            <person name="Lennard N."/>
            <person name="Logue M.E."/>
            <person name="Martin R."/>
            <person name="Neiman A.M."/>
            <person name="Nikolaou E."/>
            <person name="Quail M.A."/>
            <person name="Quinn J."/>
            <person name="Santos M.C."/>
            <person name="Schmitzberger F.F."/>
            <person name="Sherlock G."/>
            <person name="Shah P."/>
            <person name="Silverstein K.A.T."/>
            <person name="Skrzypek M.S."/>
            <person name="Soll D."/>
            <person name="Staggs R."/>
            <person name="Stansfield I."/>
            <person name="Stumpf M.P.H."/>
            <person name="Sudbery P.E."/>
            <person name="Srikantha T."/>
            <person name="Zeng Q."/>
            <person name="Berman J."/>
            <person name="Berriman M."/>
            <person name="Heitman J."/>
            <person name="Gow N.A.R."/>
            <person name="Lorenz M.C."/>
            <person name="Birren B.W."/>
            <person name="Kellis M."/>
            <person name="Cuomo C.A."/>
        </authorList>
    </citation>
    <scope>NUCLEOTIDE SEQUENCE [LARGE SCALE GENOMIC DNA]</scope>
    <source>
        <strain>ATCC 11503 / BCRC 21390 / CBS 2605 / JCM 1781 / NBRC 1676 / NRRL YB-4239</strain>
    </source>
</reference>
<dbReference type="EC" id="3.6.4.13"/>
<dbReference type="EMBL" id="CH981525">
    <property type="protein sequence ID" value="EDK44092.1"/>
    <property type="molecule type" value="Genomic_DNA"/>
</dbReference>
<dbReference type="RefSeq" id="XP_001527442.1">
    <property type="nucleotide sequence ID" value="XM_001527392.1"/>
</dbReference>
<dbReference type="SMR" id="A5DY34"/>
<dbReference type="FunCoup" id="A5DY34">
    <property type="interactions" value="893"/>
</dbReference>
<dbReference type="STRING" id="379508.A5DY34"/>
<dbReference type="GeneID" id="5234027"/>
<dbReference type="KEGG" id="lel:PVL30_002287"/>
<dbReference type="VEuPathDB" id="FungiDB:LELG_02271"/>
<dbReference type="eggNOG" id="KOG0338">
    <property type="taxonomic scope" value="Eukaryota"/>
</dbReference>
<dbReference type="HOGENOM" id="CLU_003041_3_2_1"/>
<dbReference type="InParanoid" id="A5DY34"/>
<dbReference type="OMA" id="MIDPPKQ"/>
<dbReference type="OrthoDB" id="10259843at2759"/>
<dbReference type="Proteomes" id="UP000001996">
    <property type="component" value="Unassembled WGS sequence"/>
</dbReference>
<dbReference type="GO" id="GO:0005829">
    <property type="term" value="C:cytosol"/>
    <property type="evidence" value="ECO:0007669"/>
    <property type="project" value="TreeGrafter"/>
</dbReference>
<dbReference type="GO" id="GO:0005730">
    <property type="term" value="C:nucleolus"/>
    <property type="evidence" value="ECO:0007669"/>
    <property type="project" value="UniProtKB-SubCell"/>
</dbReference>
<dbReference type="GO" id="GO:0030687">
    <property type="term" value="C:preribosome, large subunit precursor"/>
    <property type="evidence" value="ECO:0007669"/>
    <property type="project" value="EnsemblFungi"/>
</dbReference>
<dbReference type="GO" id="GO:0005524">
    <property type="term" value="F:ATP binding"/>
    <property type="evidence" value="ECO:0007669"/>
    <property type="project" value="UniProtKB-KW"/>
</dbReference>
<dbReference type="GO" id="GO:0016887">
    <property type="term" value="F:ATP hydrolysis activity"/>
    <property type="evidence" value="ECO:0007669"/>
    <property type="project" value="RHEA"/>
</dbReference>
<dbReference type="GO" id="GO:0003723">
    <property type="term" value="F:RNA binding"/>
    <property type="evidence" value="ECO:0007669"/>
    <property type="project" value="UniProtKB-KW"/>
</dbReference>
<dbReference type="GO" id="GO:0003724">
    <property type="term" value="F:RNA helicase activity"/>
    <property type="evidence" value="ECO:0007669"/>
    <property type="project" value="UniProtKB-EC"/>
</dbReference>
<dbReference type="GO" id="GO:0000027">
    <property type="term" value="P:ribosomal large subunit assembly"/>
    <property type="evidence" value="ECO:0007669"/>
    <property type="project" value="EnsemblFungi"/>
</dbReference>
<dbReference type="GO" id="GO:0006364">
    <property type="term" value="P:rRNA processing"/>
    <property type="evidence" value="ECO:0007669"/>
    <property type="project" value="EnsemblFungi"/>
</dbReference>
<dbReference type="CDD" id="cd17947">
    <property type="entry name" value="DEADc_DDX27"/>
    <property type="match status" value="1"/>
</dbReference>
<dbReference type="CDD" id="cd18787">
    <property type="entry name" value="SF2_C_DEAD"/>
    <property type="match status" value="1"/>
</dbReference>
<dbReference type="Gene3D" id="3.40.50.300">
    <property type="entry name" value="P-loop containing nucleotide triphosphate hydrolases"/>
    <property type="match status" value="2"/>
</dbReference>
<dbReference type="InterPro" id="IPR011545">
    <property type="entry name" value="DEAD/DEAH_box_helicase_dom"/>
</dbReference>
<dbReference type="InterPro" id="IPR050079">
    <property type="entry name" value="DEAD_box_RNA_helicase"/>
</dbReference>
<dbReference type="InterPro" id="IPR014001">
    <property type="entry name" value="Helicase_ATP-bd"/>
</dbReference>
<dbReference type="InterPro" id="IPR001650">
    <property type="entry name" value="Helicase_C-like"/>
</dbReference>
<dbReference type="InterPro" id="IPR027417">
    <property type="entry name" value="P-loop_NTPase"/>
</dbReference>
<dbReference type="InterPro" id="IPR000629">
    <property type="entry name" value="RNA-helicase_DEAD-box_CS"/>
</dbReference>
<dbReference type="InterPro" id="IPR014014">
    <property type="entry name" value="RNA_helicase_DEAD_Q_motif"/>
</dbReference>
<dbReference type="PANTHER" id="PTHR47959:SF1">
    <property type="entry name" value="ATP-DEPENDENT RNA HELICASE DBPA"/>
    <property type="match status" value="1"/>
</dbReference>
<dbReference type="PANTHER" id="PTHR47959">
    <property type="entry name" value="ATP-DEPENDENT RNA HELICASE RHLE-RELATED"/>
    <property type="match status" value="1"/>
</dbReference>
<dbReference type="Pfam" id="PF00270">
    <property type="entry name" value="DEAD"/>
    <property type="match status" value="1"/>
</dbReference>
<dbReference type="Pfam" id="PF00271">
    <property type="entry name" value="Helicase_C"/>
    <property type="match status" value="1"/>
</dbReference>
<dbReference type="SMART" id="SM00487">
    <property type="entry name" value="DEXDc"/>
    <property type="match status" value="1"/>
</dbReference>
<dbReference type="SMART" id="SM00490">
    <property type="entry name" value="HELICc"/>
    <property type="match status" value="1"/>
</dbReference>
<dbReference type="SUPFAM" id="SSF52540">
    <property type="entry name" value="P-loop containing nucleoside triphosphate hydrolases"/>
    <property type="match status" value="2"/>
</dbReference>
<dbReference type="PROSITE" id="PS00039">
    <property type="entry name" value="DEAD_ATP_HELICASE"/>
    <property type="match status" value="1"/>
</dbReference>
<dbReference type="PROSITE" id="PS51192">
    <property type="entry name" value="HELICASE_ATP_BIND_1"/>
    <property type="match status" value="1"/>
</dbReference>
<dbReference type="PROSITE" id="PS51194">
    <property type="entry name" value="HELICASE_CTER"/>
    <property type="match status" value="1"/>
</dbReference>
<dbReference type="PROSITE" id="PS51195">
    <property type="entry name" value="Q_MOTIF"/>
    <property type="match status" value="1"/>
</dbReference>
<accession>A5DY34</accession>
<name>DRS1_LODEL</name>
<gene>
    <name type="primary">DRS1</name>
    <name type="ORF">LELG_02271</name>
</gene>